<gene>
    <name evidence="1" type="primary">prfB</name>
    <name type="ordered locus">RD1_2819</name>
</gene>
<reference key="1">
    <citation type="journal article" date="2007" name="J. Bacteriol.">
        <title>The complete genome sequence of Roseobacter denitrificans reveals a mixotrophic rather than photosynthetic metabolism.</title>
        <authorList>
            <person name="Swingley W.D."/>
            <person name="Sadekar S."/>
            <person name="Mastrian S.D."/>
            <person name="Matthies H.J."/>
            <person name="Hao J."/>
            <person name="Ramos H."/>
            <person name="Acharya C.R."/>
            <person name="Conrad A.L."/>
            <person name="Taylor H.L."/>
            <person name="Dejesa L.C."/>
            <person name="Shah M.K."/>
            <person name="O'Huallachain M.E."/>
            <person name="Lince M.T."/>
            <person name="Blankenship R.E."/>
            <person name="Beatty J.T."/>
            <person name="Touchman J.W."/>
        </authorList>
    </citation>
    <scope>NUCLEOTIDE SEQUENCE [LARGE SCALE GENOMIC DNA]</scope>
    <source>
        <strain>ATCC 33942 / OCh 114</strain>
    </source>
</reference>
<dbReference type="EMBL" id="CP000362">
    <property type="protein sequence ID" value="ABG32347.1"/>
    <property type="molecule type" value="Genomic_DNA"/>
</dbReference>
<dbReference type="RefSeq" id="WP_011568963.1">
    <property type="nucleotide sequence ID" value="NC_008209.1"/>
</dbReference>
<dbReference type="SMR" id="Q165J6"/>
<dbReference type="STRING" id="375451.RD1_2819"/>
<dbReference type="KEGG" id="rde:RD1_2819"/>
<dbReference type="eggNOG" id="COG1186">
    <property type="taxonomic scope" value="Bacteria"/>
</dbReference>
<dbReference type="HOGENOM" id="CLU_036856_6_0_5"/>
<dbReference type="OrthoDB" id="9806673at2"/>
<dbReference type="Proteomes" id="UP000007029">
    <property type="component" value="Chromosome"/>
</dbReference>
<dbReference type="GO" id="GO:0005737">
    <property type="term" value="C:cytoplasm"/>
    <property type="evidence" value="ECO:0007669"/>
    <property type="project" value="UniProtKB-SubCell"/>
</dbReference>
<dbReference type="GO" id="GO:0016149">
    <property type="term" value="F:translation release factor activity, codon specific"/>
    <property type="evidence" value="ECO:0007669"/>
    <property type="project" value="UniProtKB-UniRule"/>
</dbReference>
<dbReference type="FunFam" id="3.30.160.20:FF:000010">
    <property type="entry name" value="Peptide chain release factor 2"/>
    <property type="match status" value="1"/>
</dbReference>
<dbReference type="Gene3D" id="3.30.160.20">
    <property type="match status" value="1"/>
</dbReference>
<dbReference type="Gene3D" id="3.30.70.1660">
    <property type="match status" value="1"/>
</dbReference>
<dbReference type="Gene3D" id="1.20.58.410">
    <property type="entry name" value="Release factor"/>
    <property type="match status" value="1"/>
</dbReference>
<dbReference type="HAMAP" id="MF_00094">
    <property type="entry name" value="Rel_fac_2"/>
    <property type="match status" value="1"/>
</dbReference>
<dbReference type="InterPro" id="IPR005139">
    <property type="entry name" value="PCRF"/>
</dbReference>
<dbReference type="InterPro" id="IPR000352">
    <property type="entry name" value="Pep_chain_release_fac_I"/>
</dbReference>
<dbReference type="InterPro" id="IPR045853">
    <property type="entry name" value="Pep_chain_release_fac_I_sf"/>
</dbReference>
<dbReference type="InterPro" id="IPR004374">
    <property type="entry name" value="PrfB"/>
</dbReference>
<dbReference type="NCBIfam" id="TIGR00020">
    <property type="entry name" value="prfB"/>
    <property type="match status" value="1"/>
</dbReference>
<dbReference type="PANTHER" id="PTHR43116:SF3">
    <property type="entry name" value="CLASS I PEPTIDE CHAIN RELEASE FACTOR"/>
    <property type="match status" value="1"/>
</dbReference>
<dbReference type="PANTHER" id="PTHR43116">
    <property type="entry name" value="PEPTIDE CHAIN RELEASE FACTOR 2"/>
    <property type="match status" value="1"/>
</dbReference>
<dbReference type="Pfam" id="PF03462">
    <property type="entry name" value="PCRF"/>
    <property type="match status" value="1"/>
</dbReference>
<dbReference type="Pfam" id="PF00472">
    <property type="entry name" value="RF-1"/>
    <property type="match status" value="1"/>
</dbReference>
<dbReference type="SMART" id="SM00937">
    <property type="entry name" value="PCRF"/>
    <property type="match status" value="1"/>
</dbReference>
<dbReference type="SUPFAM" id="SSF75620">
    <property type="entry name" value="Release factor"/>
    <property type="match status" value="1"/>
</dbReference>
<dbReference type="PROSITE" id="PS00745">
    <property type="entry name" value="RF_PROK_I"/>
    <property type="match status" value="1"/>
</dbReference>
<feature type="chain" id="PRO_1000057625" description="Peptide chain release factor 2">
    <location>
        <begin position="1"/>
        <end position="374"/>
    </location>
</feature>
<feature type="modified residue" description="N5-methylglutamine" evidence="1">
    <location>
        <position position="250"/>
    </location>
</feature>
<protein>
    <recommendedName>
        <fullName evidence="1">Peptide chain release factor 2</fullName>
        <shortName evidence="1">RF-2</shortName>
    </recommendedName>
</protein>
<keyword id="KW-0963">Cytoplasm</keyword>
<keyword id="KW-0488">Methylation</keyword>
<keyword id="KW-0648">Protein biosynthesis</keyword>
<keyword id="KW-1185">Reference proteome</keyword>
<proteinExistence type="inferred from homology"/>
<name>RF2_ROSDO</name>
<accession>Q165J6</accession>
<evidence type="ECO:0000255" key="1">
    <source>
        <dbReference type="HAMAP-Rule" id="MF_00094"/>
    </source>
</evidence>
<comment type="function">
    <text evidence="1">Peptide chain release factor 2 directs the termination of translation in response to the peptide chain termination codons UGA and UAA.</text>
</comment>
<comment type="subcellular location">
    <subcellularLocation>
        <location evidence="1">Cytoplasm</location>
    </subcellularLocation>
</comment>
<comment type="PTM">
    <text evidence="1">Methylated by PrmC. Methylation increases the termination efficiency of RF2.</text>
</comment>
<comment type="similarity">
    <text evidence="1">Belongs to the prokaryotic/mitochondrial release factor family.</text>
</comment>
<organism>
    <name type="scientific">Roseobacter denitrificans (strain ATCC 33942 / OCh 114)</name>
    <name type="common">Erythrobacter sp. (strain OCh 114)</name>
    <name type="synonym">Roseobacter denitrificans</name>
    <dbReference type="NCBI Taxonomy" id="375451"/>
    <lineage>
        <taxon>Bacteria</taxon>
        <taxon>Pseudomonadati</taxon>
        <taxon>Pseudomonadota</taxon>
        <taxon>Alphaproteobacteria</taxon>
        <taxon>Rhodobacterales</taxon>
        <taxon>Roseobacteraceae</taxon>
        <taxon>Roseobacter</taxon>
    </lineage>
</organism>
<sequence length="374" mass="41476">MRADVQNTIEKIQKSLDLLAQRLDVETAPYRLEEFNARVEDPTLWDDPDAAQKLMRERQMLVDAMATHDSIKQEMADNIELIELGEMEDDADVVSDAENALRALEETAAKKELEALLDGEADSNDTFLEVNAGAGGTESCDWASMLARMYVRWAEKKGYKVELQSMSDGDEAGIKSATYKITGLNAYGWLKSESGVHRLVRISPFDSAAKRHTSFSSVWVYPVVDDNIDIEVNPADIRIDTYRSSGAGGQHVNTTDSAVRITHHPTGIVVTSSEKSQHQNRDIAMKALKSRLYQLELDRRNAAINEAHENKGDAGWGNQIRSYVLQPYQMVKDLRTNFETSDTKGVLDGDLDGFMAATLALDASGKTRAEAQNG</sequence>